<comment type="function">
    <text evidence="1">Component of the cytochrome b6-f complex, which mediates electron transfer between photosystem II (PSII) and photosystem I (PSI), cyclic electron flow around PSI, and state transitions.</text>
</comment>
<comment type="subunit">
    <text evidence="1">The 4 large subunits of the cytochrome b6-f complex are cytochrome b6, subunit IV (17 kDa polypeptide, PetD), cytochrome f and the Rieske protein, while the 4 small subunits are PetG, PetL, PetM and PetN. The complex functions as a dimer.</text>
</comment>
<comment type="subcellular location">
    <subcellularLocation>
        <location evidence="1">Plastid</location>
        <location evidence="1">Chloroplast thylakoid membrane</location>
        <topology evidence="1">Single-pass membrane protein</topology>
    </subcellularLocation>
</comment>
<comment type="similarity">
    <text evidence="1">Belongs to the PetN family.</text>
</comment>
<organism>
    <name type="scientific">Arabis hirsuta</name>
    <name type="common">Hairy rock-cress</name>
    <name type="synonym">Turritis hirsuta</name>
    <dbReference type="NCBI Taxonomy" id="78191"/>
    <lineage>
        <taxon>Eukaryota</taxon>
        <taxon>Viridiplantae</taxon>
        <taxon>Streptophyta</taxon>
        <taxon>Embryophyta</taxon>
        <taxon>Tracheophyta</taxon>
        <taxon>Spermatophyta</taxon>
        <taxon>Magnoliopsida</taxon>
        <taxon>eudicotyledons</taxon>
        <taxon>Gunneridae</taxon>
        <taxon>Pentapetalae</taxon>
        <taxon>rosids</taxon>
        <taxon>malvids</taxon>
        <taxon>Brassicales</taxon>
        <taxon>Brassicaceae</taxon>
        <taxon>Arabideae</taxon>
        <taxon>Arabis</taxon>
    </lineage>
</organism>
<accession>A4QK11</accession>
<evidence type="ECO:0000255" key="1">
    <source>
        <dbReference type="HAMAP-Rule" id="MF_00395"/>
    </source>
</evidence>
<keyword id="KW-0150">Chloroplast</keyword>
<keyword id="KW-0249">Electron transport</keyword>
<keyword id="KW-0472">Membrane</keyword>
<keyword id="KW-0602">Photosynthesis</keyword>
<keyword id="KW-0934">Plastid</keyword>
<keyword id="KW-0793">Thylakoid</keyword>
<keyword id="KW-0812">Transmembrane</keyword>
<keyword id="KW-1133">Transmembrane helix</keyword>
<keyword id="KW-0813">Transport</keyword>
<geneLocation type="chloroplast"/>
<protein>
    <recommendedName>
        <fullName evidence="1">Cytochrome b6-f complex subunit 8</fullName>
    </recommendedName>
    <alternativeName>
        <fullName evidence="1">Cytochrome b6-f complex subunit PetN</fullName>
    </alternativeName>
    <alternativeName>
        <fullName evidence="1">Cytochrome b6-f complex subunit VIII</fullName>
    </alternativeName>
</protein>
<feature type="chain" id="PRO_0000355421" description="Cytochrome b6-f complex subunit 8">
    <location>
        <begin position="1"/>
        <end position="29"/>
    </location>
</feature>
<feature type="transmembrane region" description="Helical" evidence="1">
    <location>
        <begin position="3"/>
        <end position="23"/>
    </location>
</feature>
<reference key="1">
    <citation type="submission" date="2007-03" db="EMBL/GenBank/DDBJ databases">
        <title>Sequencing analysis of Arabis hirsuta chloroplast DNA.</title>
        <authorList>
            <person name="Hosouchi T."/>
            <person name="Tsuruoka H."/>
            <person name="Kotani H."/>
        </authorList>
    </citation>
    <scope>NUCLEOTIDE SEQUENCE [LARGE SCALE GENOMIC DNA]</scope>
</reference>
<name>PETN_ARAHI</name>
<gene>
    <name evidence="1" type="primary">petN</name>
</gene>
<proteinExistence type="inferred from homology"/>
<sequence length="29" mass="3156">MDIVSLAWAGLMVVFTFSLSLVVWGRSGL</sequence>
<dbReference type="EMBL" id="AP009369">
    <property type="protein sequence ID" value="BAF50016.1"/>
    <property type="molecule type" value="Genomic_DNA"/>
</dbReference>
<dbReference type="RefSeq" id="YP_001123192.1">
    <property type="nucleotide sequence ID" value="NC_009268.1"/>
</dbReference>
<dbReference type="SMR" id="A4QK11"/>
<dbReference type="GeneID" id="4962622"/>
<dbReference type="GO" id="GO:0009535">
    <property type="term" value="C:chloroplast thylakoid membrane"/>
    <property type="evidence" value="ECO:0007669"/>
    <property type="project" value="UniProtKB-SubCell"/>
</dbReference>
<dbReference type="GO" id="GO:0009512">
    <property type="term" value="C:cytochrome b6f complex"/>
    <property type="evidence" value="ECO:0007669"/>
    <property type="project" value="InterPro"/>
</dbReference>
<dbReference type="GO" id="GO:0045158">
    <property type="term" value="F:electron transporter, transferring electrons within cytochrome b6/f complex of photosystem II activity"/>
    <property type="evidence" value="ECO:0007669"/>
    <property type="project" value="InterPro"/>
</dbReference>
<dbReference type="GO" id="GO:0017004">
    <property type="term" value="P:cytochrome complex assembly"/>
    <property type="evidence" value="ECO:0007669"/>
    <property type="project" value="UniProtKB-UniRule"/>
</dbReference>
<dbReference type="GO" id="GO:0015979">
    <property type="term" value="P:photosynthesis"/>
    <property type="evidence" value="ECO:0007669"/>
    <property type="project" value="UniProtKB-KW"/>
</dbReference>
<dbReference type="HAMAP" id="MF_00395">
    <property type="entry name" value="Cytb6_f_PetN"/>
    <property type="match status" value="1"/>
</dbReference>
<dbReference type="InterPro" id="IPR036143">
    <property type="entry name" value="Cytochr_b6-f_cplx_su8_sf"/>
</dbReference>
<dbReference type="InterPro" id="IPR005497">
    <property type="entry name" value="Cytochrome_b6-f_cplx_su8"/>
</dbReference>
<dbReference type="Pfam" id="PF03742">
    <property type="entry name" value="PetN"/>
    <property type="match status" value="1"/>
</dbReference>
<dbReference type="SUPFAM" id="SSF103451">
    <property type="entry name" value="PetN subunit of the cytochrome b6f complex"/>
    <property type="match status" value="1"/>
</dbReference>